<accession>B8D710</accession>
<gene>
    <name evidence="1" type="primary">hisA</name>
    <name type="ordered locus">BUAPTUC7_103</name>
</gene>
<comment type="catalytic activity">
    <reaction evidence="1">
        <text>1-(5-phospho-beta-D-ribosyl)-5-[(5-phospho-beta-D-ribosylamino)methylideneamino]imidazole-4-carboxamide = 5-[(5-phospho-1-deoxy-D-ribulos-1-ylimino)methylamino]-1-(5-phospho-beta-D-ribosyl)imidazole-4-carboxamide</text>
        <dbReference type="Rhea" id="RHEA:15469"/>
        <dbReference type="ChEBI" id="CHEBI:58435"/>
        <dbReference type="ChEBI" id="CHEBI:58525"/>
        <dbReference type="EC" id="5.3.1.16"/>
    </reaction>
</comment>
<comment type="pathway">
    <text evidence="1">Amino-acid biosynthesis; L-histidine biosynthesis; L-histidine from 5-phospho-alpha-D-ribose 1-diphosphate: step 4/9.</text>
</comment>
<comment type="subcellular location">
    <subcellularLocation>
        <location evidence="1">Cytoplasm</location>
    </subcellularLocation>
</comment>
<comment type="similarity">
    <text evidence="1">Belongs to the HisA/HisF family.</text>
</comment>
<evidence type="ECO:0000255" key="1">
    <source>
        <dbReference type="HAMAP-Rule" id="MF_01014"/>
    </source>
</evidence>
<feature type="chain" id="PRO_1000148959" description="1-(5-phosphoribosyl)-5-[(5-phosphoribosylamino)methylideneamino] imidazole-4-carboxamide isomerase">
    <location>
        <begin position="1"/>
        <end position="246"/>
    </location>
</feature>
<feature type="active site" description="Proton acceptor" evidence="1">
    <location>
        <position position="7"/>
    </location>
</feature>
<feature type="active site" description="Proton donor" evidence="1">
    <location>
        <position position="129"/>
    </location>
</feature>
<sequence>MIIPAFDLINGRTVRLYQGDYSNQKNYNVNLFNSLEVYKSKGIEIVHLVDLDGAKNSANRQIELLKKIVSHTTVPVQVGGGIRTTKDISTLLDLGVKRVVIGSSIVSNKKQVKQWLNFYGPDAIVLALDVHVDSSNKKEISIDGWQKKTNFILEEIIEYFLSSGLKHVLCTDISRDGTLLGPNFKLYKEICSNFKNINFQASGGVASLQDIIFLKKTGVKSIIIGRSLLEKKFTIEEAVKCWQRES</sequence>
<dbReference type="EC" id="5.3.1.16" evidence="1"/>
<dbReference type="EMBL" id="CP001158">
    <property type="protein sequence ID" value="ACL29925.1"/>
    <property type="molecule type" value="Genomic_DNA"/>
</dbReference>
<dbReference type="RefSeq" id="WP_012619430.1">
    <property type="nucleotide sequence ID" value="NC_011834.1"/>
</dbReference>
<dbReference type="SMR" id="B8D710"/>
<dbReference type="KEGG" id="bau:BUAPTUC7_103"/>
<dbReference type="HOGENOM" id="CLU_048577_1_2_6"/>
<dbReference type="UniPathway" id="UPA00031">
    <property type="reaction ID" value="UER00009"/>
</dbReference>
<dbReference type="GO" id="GO:0005737">
    <property type="term" value="C:cytoplasm"/>
    <property type="evidence" value="ECO:0007669"/>
    <property type="project" value="UniProtKB-SubCell"/>
</dbReference>
<dbReference type="GO" id="GO:0003949">
    <property type="term" value="F:1-(5-phosphoribosyl)-5-[(5-phosphoribosylamino)methylideneamino]imidazole-4-carboxamide isomerase activity"/>
    <property type="evidence" value="ECO:0007669"/>
    <property type="project" value="UniProtKB-UniRule"/>
</dbReference>
<dbReference type="GO" id="GO:0000105">
    <property type="term" value="P:L-histidine biosynthetic process"/>
    <property type="evidence" value="ECO:0007669"/>
    <property type="project" value="UniProtKB-UniRule"/>
</dbReference>
<dbReference type="GO" id="GO:0000162">
    <property type="term" value="P:L-tryptophan biosynthetic process"/>
    <property type="evidence" value="ECO:0007669"/>
    <property type="project" value="TreeGrafter"/>
</dbReference>
<dbReference type="CDD" id="cd04732">
    <property type="entry name" value="HisA"/>
    <property type="match status" value="1"/>
</dbReference>
<dbReference type="FunFam" id="3.20.20.70:FF:000009">
    <property type="entry name" value="1-(5-phosphoribosyl)-5-[(5-phosphoribosylamino)methylideneamino] imidazole-4-carboxamide isomerase"/>
    <property type="match status" value="1"/>
</dbReference>
<dbReference type="Gene3D" id="3.20.20.70">
    <property type="entry name" value="Aldolase class I"/>
    <property type="match status" value="1"/>
</dbReference>
<dbReference type="HAMAP" id="MF_01014">
    <property type="entry name" value="HisA"/>
    <property type="match status" value="1"/>
</dbReference>
<dbReference type="InterPro" id="IPR013785">
    <property type="entry name" value="Aldolase_TIM"/>
</dbReference>
<dbReference type="InterPro" id="IPR006062">
    <property type="entry name" value="His_biosynth"/>
</dbReference>
<dbReference type="InterPro" id="IPR006063">
    <property type="entry name" value="HisA_bact_arch"/>
</dbReference>
<dbReference type="InterPro" id="IPR044524">
    <property type="entry name" value="Isoase_HisA-like"/>
</dbReference>
<dbReference type="InterPro" id="IPR023016">
    <property type="entry name" value="Isoase_HisA-like_bact"/>
</dbReference>
<dbReference type="InterPro" id="IPR011060">
    <property type="entry name" value="RibuloseP-bd_barrel"/>
</dbReference>
<dbReference type="NCBIfam" id="TIGR00007">
    <property type="entry name" value="1-(5-phosphoribosyl)-5-[(5-phosphoribosylamino)methylideneamino]imidazole-4-carboxamide isomerase"/>
    <property type="match status" value="1"/>
</dbReference>
<dbReference type="PANTHER" id="PTHR43090">
    <property type="entry name" value="1-(5-PHOSPHORIBOSYL)-5-[(5-PHOSPHORIBOSYLAMINO)METHYLIDENEAMINO] IMIDAZOLE-4-CARBOXAMIDE ISOMERASE"/>
    <property type="match status" value="1"/>
</dbReference>
<dbReference type="PANTHER" id="PTHR43090:SF2">
    <property type="entry name" value="1-(5-PHOSPHORIBOSYL)-5-[(5-PHOSPHORIBOSYLAMINO)METHYLIDENEAMINO] IMIDAZOLE-4-CARBOXAMIDE ISOMERASE"/>
    <property type="match status" value="1"/>
</dbReference>
<dbReference type="Pfam" id="PF00977">
    <property type="entry name" value="His_biosynth"/>
    <property type="match status" value="1"/>
</dbReference>
<dbReference type="SUPFAM" id="SSF51366">
    <property type="entry name" value="Ribulose-phoshate binding barrel"/>
    <property type="match status" value="1"/>
</dbReference>
<proteinExistence type="inferred from homology"/>
<name>HIS4_BUCAT</name>
<reference key="1">
    <citation type="journal article" date="2009" name="Science">
        <title>The dynamics and time scale of ongoing genomic erosion in symbiotic bacteria.</title>
        <authorList>
            <person name="Moran N.A."/>
            <person name="McLaughlin H.J."/>
            <person name="Sorek R."/>
        </authorList>
    </citation>
    <scope>NUCLEOTIDE SEQUENCE [LARGE SCALE GENOMIC DNA]</scope>
    <source>
        <strain>Tuc7</strain>
    </source>
</reference>
<protein>
    <recommendedName>
        <fullName evidence="1">1-(5-phosphoribosyl)-5-[(5-phosphoribosylamino)methylideneamino] imidazole-4-carboxamide isomerase</fullName>
        <ecNumber evidence="1">5.3.1.16</ecNumber>
    </recommendedName>
    <alternativeName>
        <fullName evidence="1">Phosphoribosylformimino-5-aminoimidazole carboxamide ribotide isomerase</fullName>
    </alternativeName>
</protein>
<organism>
    <name type="scientific">Buchnera aphidicola subsp. Acyrthosiphon pisum (strain Tuc7)</name>
    <dbReference type="NCBI Taxonomy" id="561501"/>
    <lineage>
        <taxon>Bacteria</taxon>
        <taxon>Pseudomonadati</taxon>
        <taxon>Pseudomonadota</taxon>
        <taxon>Gammaproteobacteria</taxon>
        <taxon>Enterobacterales</taxon>
        <taxon>Erwiniaceae</taxon>
        <taxon>Buchnera</taxon>
    </lineage>
</organism>
<keyword id="KW-0028">Amino-acid biosynthesis</keyword>
<keyword id="KW-0963">Cytoplasm</keyword>
<keyword id="KW-0368">Histidine biosynthesis</keyword>
<keyword id="KW-0413">Isomerase</keyword>